<accession>Q53R12</accession>
<accession>B2RP42</accession>
<accession>Q5U609</accession>
<accession>Q6UWS1</accession>
<accession>Q9H5X9</accession>
<comment type="function">
    <text evidence="5 6">Polytopic transmembrane protein that inhibits regulated intramembrane proteolysis (RIP) of CREB3L1, inhibiting its activation and the induction of collagen synthesis (PubMed:25310401, PubMed:27499293). In response to ceramide, which alters TM4SF20 membrane topology, stimulates RIP activation of CREB3L1 (PubMed:27499293). Ceramide reverses the direction through which transmembrane helices are translocated into the endoplasmic reticulum membrane during translation of TM4SF20, this mechanism is called 'regulated alternative translocation' (RAT) and regulates the function of the transmembrane protein (PubMed:27499293).</text>
</comment>
<comment type="interaction">
    <interactant intactId="EBI-1805798">
        <id>Q53R12</id>
    </interactant>
    <interactant intactId="EBI-10317425">
        <id>Q9NZG7</id>
        <label>NINJ2</label>
    </interactant>
    <organismsDiffer>false</organismsDiffer>
    <experiments>3</experiments>
</comment>
<comment type="interaction">
    <interactant intactId="EBI-1805798">
        <id>Q53R12</id>
    </interactant>
    <interactant intactId="EBI-722343">
        <id>Q15836</id>
        <label>VAMP3</label>
    </interactant>
    <organismsDiffer>false</organismsDiffer>
    <experiments>3</experiments>
</comment>
<comment type="subcellular location">
    <subcellularLocation>
        <location evidence="4">Membrane</location>
        <topology evidence="4">Multi-pass membrane protein</topology>
    </subcellularLocation>
    <subcellularLocation>
        <location evidence="5">Endoplasmic reticulum membrane</location>
        <topology evidence="5">Multi-pass membrane protein</topology>
    </subcellularLocation>
    <text evidence="6">Ceramide alters the direction through which transmembrane helices are translocated into the endoplasmic reticulum membrane during translation of TM4SF20.</text>
</comment>
<comment type="tissue specificity">
    <text evidence="4">Expressed in the brain, with high levels in the parietal lobe, hippocampus, pons, white matter and cerebellum.</text>
</comment>
<comment type="induction">
    <text evidence="5">TGFB1 inhibits TM4SF20 expression to activate CREB3L1 (PubMed:25310401).</text>
</comment>
<comment type="domain">
    <text evidence="6">The first transmembrane helix plays a critical role for the insertion orientation in the endoplasmic reticulum membrane.</text>
</comment>
<comment type="PTM">
    <text evidence="6">Glycosylated at Asn-132, Asn-148 and Asn-163 in presence of ceramide which inverts the orientation of TM4SF20 in membranes exposing these residues to the endoplasmic reticulum lumen.</text>
</comment>
<comment type="PTM">
    <text evidence="6">Cleaved by signal peptidase at Ser-14 but the peptide does not act as a signal peptide. Cleavage is inhibited by ceramide which inverts the orientation of TM4SF20 in membranes exposing the N-terminus to the cytosol and not to the endoplasmic reticulum lumen.</text>
</comment>
<comment type="disease" evidence="4">
    <disease id="DI-03910">
        <name>Specific language impairment 5</name>
        <acronym>SLI5</acronym>
        <description>A disorder characterized by a delay in early speech acquisition. It is usually associated with cerebral white matter abnormalities on brain MRI. Some individuals may show disorders in communication, consistent with autism spectrum disorder, or global developmental delay, although others ultimately show normal cognitive function. Penetrance is incomplete and expressivity is variable.</description>
        <dbReference type="MIM" id="615432"/>
    </disease>
    <text>The disease is caused by variants affecting the gene represented in this entry.</text>
</comment>
<comment type="similarity">
    <text evidence="7">Belongs to the L6 tetraspanin family.</text>
</comment>
<proteinExistence type="evidence at protein level"/>
<feature type="chain" id="PRO_0000251228" description="Transmembrane 4 L6 family member 20">
    <location>
        <begin position="1"/>
        <end position="229"/>
    </location>
</feature>
<feature type="topological domain" description="Lumenal" evidence="7">
    <location>
        <begin position="1"/>
        <end position="14"/>
    </location>
</feature>
<feature type="transmembrane region" description="Helical" evidence="1">
    <location>
        <begin position="15"/>
        <end position="35"/>
    </location>
</feature>
<feature type="topological domain" description="Cytoplasmic" evidence="7">
    <location>
        <begin position="36"/>
        <end position="44"/>
    </location>
</feature>
<feature type="transmembrane region" description="Helical" evidence="1">
    <location>
        <begin position="45"/>
        <end position="65"/>
    </location>
</feature>
<feature type="topological domain" description="Lumenal" evidence="7">
    <location>
        <begin position="66"/>
        <end position="83"/>
    </location>
</feature>
<feature type="transmembrane region" description="Helical" evidence="1">
    <location>
        <begin position="84"/>
        <end position="104"/>
    </location>
</feature>
<feature type="topological domain" description="Cytoplasmic" evidence="7">
    <location>
        <begin position="105"/>
        <end position="185"/>
    </location>
</feature>
<feature type="transmembrane region" description="Helical" evidence="1">
    <location>
        <begin position="186"/>
        <end position="206"/>
    </location>
</feature>
<feature type="topological domain" description="Lumenal" evidence="7">
    <location>
        <begin position="207"/>
        <end position="229"/>
    </location>
</feature>
<feature type="site" description="Cleavage" evidence="6">
    <location>
        <begin position="13"/>
        <end position="14"/>
    </location>
</feature>
<feature type="sequence variant" id="VAR_027673" description="In dbSNP:rs7574414." evidence="2 3">
    <original>A</original>
    <variation>V</variation>
    <location>
        <position position="27"/>
    </location>
</feature>
<feature type="mutagenesis site" description="No effect on cleavage of the first 13 residues." evidence="6">
    <original>G</original>
    <variation>P</variation>
    <location>
        <position position="12"/>
    </location>
</feature>
<feature type="mutagenesis site" description="No effect on cleavage of the first 13 residues." evidence="6">
    <original>F</original>
    <variation>P</variation>
    <location>
        <position position="13"/>
    </location>
</feature>
<feature type="mutagenesis site" description="Abolishes cleavage of the first 13 residues." evidence="6">
    <original>S</original>
    <variation>P</variation>
    <location>
        <position position="14"/>
    </location>
</feature>
<feature type="mutagenesis site" description="No effect on cleavage of the first 13 residues." evidence="6">
    <original>L</original>
    <variation>P</variation>
    <location>
        <position position="15"/>
    </location>
</feature>
<feature type="mutagenesis site" description="No effect on cleavage of the first 13 residues." evidence="6">
    <original>L</original>
    <variation>P</variation>
    <location>
        <position position="16"/>
    </location>
</feature>
<feature type="mutagenesis site" description="Inverts transmembrane topology. Induces cleavage of CREB3L1." evidence="6">
    <original>G</original>
    <variation>L</variation>
    <location>
        <position position="22"/>
    </location>
</feature>
<feature type="mutagenesis site" description="Inverts transmembrane topology." evidence="6">
    <original>N</original>
    <variation>L</variation>
    <location>
        <position position="26"/>
    </location>
</feature>
<feature type="mutagenesis site" description="No effect on glycosylation upon ceramide treatment." evidence="6">
    <original>N</original>
    <variation>Q</variation>
    <location>
        <position position="80"/>
    </location>
</feature>
<feature type="mutagenesis site" description="Reduces glycosylation upon ceramide treatment. Abolishes glycosylation upon ceramide treatment; when associated with Q-132 and Q-163." evidence="6">
    <original>N</original>
    <variation>Q</variation>
    <location>
        <position position="132"/>
    </location>
</feature>
<feature type="mutagenesis site" description="Reduces glycosylation upon ceramide treatment. Abolishes glycosylation upon ceramide treatment; when associated with Q-132 and Q-163." evidence="6">
    <original>N</original>
    <variation>Q</variation>
    <location>
        <position position="148"/>
    </location>
</feature>
<feature type="mutagenesis site" description="Reduces glycosylation upon ceramide treatment. Abolishes glycosylation upon ceramide treatment; when associated with Q-132 and Q-148." evidence="6">
    <original>N</original>
    <variation>Q</variation>
    <location>
        <position position="163"/>
    </location>
</feature>
<feature type="sequence conflict" description="In Ref. 1; AAQ89034 and 4; AAH35754." evidence="7" ref="1 4">
    <original>L</original>
    <variation>F</variation>
    <location>
        <position position="89"/>
    </location>
</feature>
<keyword id="KW-1268">Autism spectrum disorder</keyword>
<keyword id="KW-0256">Endoplasmic reticulum</keyword>
<keyword id="KW-0472">Membrane</keyword>
<keyword id="KW-1267">Proteomics identification</keyword>
<keyword id="KW-1185">Reference proteome</keyword>
<keyword id="KW-0812">Transmembrane</keyword>
<keyword id="KW-1133">Transmembrane helix</keyword>
<gene>
    <name type="primary">TM4SF20</name>
    <name type="ORF">UNQ518/PRO994</name>
</gene>
<protein>
    <recommendedName>
        <fullName>Transmembrane 4 L6 family member 20</fullName>
    </recommendedName>
</protein>
<sequence length="229" mass="25075">MTCCEGWTSCNGFSLLVLLLLGVVLNAIPLIVSLVEEDQFSQNPISCFEWWFPGIIGAGLMAIPATTMSLTARKRACCNNRTGMFLSSLFSVITVIGALYCMLISIQALLKGPLMCNSPSNSNANCEFSLKNISDIHPESFNLQWFFNDSCAPPTGFNKPTSNDTMASGWRASSFHFDSEENKHRLIHFSVFLGLLLVGILEVLFGLSQIVIGFLGCLCGVSKRRSQIV</sequence>
<evidence type="ECO:0000255" key="1"/>
<evidence type="ECO:0000269" key="2">
    <source>
    </source>
</evidence>
<evidence type="ECO:0000269" key="3">
    <source>
    </source>
</evidence>
<evidence type="ECO:0000269" key="4">
    <source>
    </source>
</evidence>
<evidence type="ECO:0000269" key="5">
    <source>
    </source>
</evidence>
<evidence type="ECO:0000269" key="6">
    <source>
    </source>
</evidence>
<evidence type="ECO:0000305" key="7"/>
<reference key="1">
    <citation type="journal article" date="2003" name="Genome Res.">
        <title>The secreted protein discovery initiative (SPDI), a large-scale effort to identify novel human secreted and transmembrane proteins: a bioinformatics assessment.</title>
        <authorList>
            <person name="Clark H.F."/>
            <person name="Gurney A.L."/>
            <person name="Abaya E."/>
            <person name="Baker K."/>
            <person name="Baldwin D.T."/>
            <person name="Brush J."/>
            <person name="Chen J."/>
            <person name="Chow B."/>
            <person name="Chui C."/>
            <person name="Crowley C."/>
            <person name="Currell B."/>
            <person name="Deuel B."/>
            <person name="Dowd P."/>
            <person name="Eaton D."/>
            <person name="Foster J.S."/>
            <person name="Grimaldi C."/>
            <person name="Gu Q."/>
            <person name="Hass P.E."/>
            <person name="Heldens S."/>
            <person name="Huang A."/>
            <person name="Kim H.S."/>
            <person name="Klimowski L."/>
            <person name="Jin Y."/>
            <person name="Johnson S."/>
            <person name="Lee J."/>
            <person name="Lewis L."/>
            <person name="Liao D."/>
            <person name="Mark M.R."/>
            <person name="Robbie E."/>
            <person name="Sanchez C."/>
            <person name="Schoenfeld J."/>
            <person name="Seshagiri S."/>
            <person name="Simmons L."/>
            <person name="Singh J."/>
            <person name="Smith V."/>
            <person name="Stinson J."/>
            <person name="Vagts A."/>
            <person name="Vandlen R.L."/>
            <person name="Watanabe C."/>
            <person name="Wieand D."/>
            <person name="Woods K."/>
            <person name="Xie M.-H."/>
            <person name="Yansura D.G."/>
            <person name="Yi S."/>
            <person name="Yu G."/>
            <person name="Yuan J."/>
            <person name="Zhang M."/>
            <person name="Zhang Z."/>
            <person name="Goddard A.D."/>
            <person name="Wood W.I."/>
            <person name="Godowski P.J."/>
            <person name="Gray A.M."/>
        </authorList>
    </citation>
    <scope>NUCLEOTIDE SEQUENCE [LARGE SCALE MRNA]</scope>
</reference>
<reference key="2">
    <citation type="journal article" date="2004" name="Nat. Genet.">
        <title>Complete sequencing and characterization of 21,243 full-length human cDNAs.</title>
        <authorList>
            <person name="Ota T."/>
            <person name="Suzuki Y."/>
            <person name="Nishikawa T."/>
            <person name="Otsuki T."/>
            <person name="Sugiyama T."/>
            <person name="Irie R."/>
            <person name="Wakamatsu A."/>
            <person name="Hayashi K."/>
            <person name="Sato H."/>
            <person name="Nagai K."/>
            <person name="Kimura K."/>
            <person name="Makita H."/>
            <person name="Sekine M."/>
            <person name="Obayashi M."/>
            <person name="Nishi T."/>
            <person name="Shibahara T."/>
            <person name="Tanaka T."/>
            <person name="Ishii S."/>
            <person name="Yamamoto J."/>
            <person name="Saito K."/>
            <person name="Kawai Y."/>
            <person name="Isono Y."/>
            <person name="Nakamura Y."/>
            <person name="Nagahari K."/>
            <person name="Murakami K."/>
            <person name="Yasuda T."/>
            <person name="Iwayanagi T."/>
            <person name="Wagatsuma M."/>
            <person name="Shiratori A."/>
            <person name="Sudo H."/>
            <person name="Hosoiri T."/>
            <person name="Kaku Y."/>
            <person name="Kodaira H."/>
            <person name="Kondo H."/>
            <person name="Sugawara M."/>
            <person name="Takahashi M."/>
            <person name="Kanda K."/>
            <person name="Yokoi T."/>
            <person name="Furuya T."/>
            <person name="Kikkawa E."/>
            <person name="Omura Y."/>
            <person name="Abe K."/>
            <person name="Kamihara K."/>
            <person name="Katsuta N."/>
            <person name="Sato K."/>
            <person name="Tanikawa M."/>
            <person name="Yamazaki M."/>
            <person name="Ninomiya K."/>
            <person name="Ishibashi T."/>
            <person name="Yamashita H."/>
            <person name="Murakawa K."/>
            <person name="Fujimori K."/>
            <person name="Tanai H."/>
            <person name="Kimata M."/>
            <person name="Watanabe M."/>
            <person name="Hiraoka S."/>
            <person name="Chiba Y."/>
            <person name="Ishida S."/>
            <person name="Ono Y."/>
            <person name="Takiguchi S."/>
            <person name="Watanabe S."/>
            <person name="Yosida M."/>
            <person name="Hotuta T."/>
            <person name="Kusano J."/>
            <person name="Kanehori K."/>
            <person name="Takahashi-Fujii A."/>
            <person name="Hara H."/>
            <person name="Tanase T.-O."/>
            <person name="Nomura Y."/>
            <person name="Togiya S."/>
            <person name="Komai F."/>
            <person name="Hara R."/>
            <person name="Takeuchi K."/>
            <person name="Arita M."/>
            <person name="Imose N."/>
            <person name="Musashino K."/>
            <person name="Yuuki H."/>
            <person name="Oshima A."/>
            <person name="Sasaki N."/>
            <person name="Aotsuka S."/>
            <person name="Yoshikawa Y."/>
            <person name="Matsunawa H."/>
            <person name="Ichihara T."/>
            <person name="Shiohata N."/>
            <person name="Sano S."/>
            <person name="Moriya S."/>
            <person name="Momiyama H."/>
            <person name="Satoh N."/>
            <person name="Takami S."/>
            <person name="Terashima Y."/>
            <person name="Suzuki O."/>
            <person name="Nakagawa S."/>
            <person name="Senoh A."/>
            <person name="Mizoguchi H."/>
            <person name="Goto Y."/>
            <person name="Shimizu F."/>
            <person name="Wakebe H."/>
            <person name="Hishigaki H."/>
            <person name="Watanabe T."/>
            <person name="Sugiyama A."/>
            <person name="Takemoto M."/>
            <person name="Kawakami B."/>
            <person name="Yamazaki M."/>
            <person name="Watanabe K."/>
            <person name="Kumagai A."/>
            <person name="Itakura S."/>
            <person name="Fukuzumi Y."/>
            <person name="Fujimori Y."/>
            <person name="Komiyama M."/>
            <person name="Tashiro H."/>
            <person name="Tanigami A."/>
            <person name="Fujiwara T."/>
            <person name="Ono T."/>
            <person name="Yamada K."/>
            <person name="Fujii Y."/>
            <person name="Ozaki K."/>
            <person name="Hirao M."/>
            <person name="Ohmori Y."/>
            <person name="Kawabata A."/>
            <person name="Hikiji T."/>
            <person name="Kobatake N."/>
            <person name="Inagaki H."/>
            <person name="Ikema Y."/>
            <person name="Okamoto S."/>
            <person name="Okitani R."/>
            <person name="Kawakami T."/>
            <person name="Noguchi S."/>
            <person name="Itoh T."/>
            <person name="Shigeta K."/>
            <person name="Senba T."/>
            <person name="Matsumura K."/>
            <person name="Nakajima Y."/>
            <person name="Mizuno T."/>
            <person name="Morinaga M."/>
            <person name="Sasaki M."/>
            <person name="Togashi T."/>
            <person name="Oyama M."/>
            <person name="Hata H."/>
            <person name="Watanabe M."/>
            <person name="Komatsu T."/>
            <person name="Mizushima-Sugano J."/>
            <person name="Satoh T."/>
            <person name="Shirai Y."/>
            <person name="Takahashi Y."/>
            <person name="Nakagawa K."/>
            <person name="Okumura K."/>
            <person name="Nagase T."/>
            <person name="Nomura N."/>
            <person name="Kikuchi H."/>
            <person name="Masuho Y."/>
            <person name="Yamashita R."/>
            <person name="Nakai K."/>
            <person name="Yada T."/>
            <person name="Nakamura Y."/>
            <person name="Ohara O."/>
            <person name="Isogai T."/>
            <person name="Sugano S."/>
        </authorList>
    </citation>
    <scope>NUCLEOTIDE SEQUENCE [LARGE SCALE MRNA]</scope>
    <scope>VARIANT VAL-27</scope>
    <source>
        <tissue>Ileal mucosa</tissue>
    </source>
</reference>
<reference key="3">
    <citation type="journal article" date="2005" name="Nature">
        <title>Generation and annotation of the DNA sequences of human chromosomes 2 and 4.</title>
        <authorList>
            <person name="Hillier L.W."/>
            <person name="Graves T.A."/>
            <person name="Fulton R.S."/>
            <person name="Fulton L.A."/>
            <person name="Pepin K.H."/>
            <person name="Minx P."/>
            <person name="Wagner-McPherson C."/>
            <person name="Layman D."/>
            <person name="Wylie K."/>
            <person name="Sekhon M."/>
            <person name="Becker M.C."/>
            <person name="Fewell G.A."/>
            <person name="Delehaunty K.D."/>
            <person name="Miner T.L."/>
            <person name="Nash W.E."/>
            <person name="Kremitzki C."/>
            <person name="Oddy L."/>
            <person name="Du H."/>
            <person name="Sun H."/>
            <person name="Bradshaw-Cordum H."/>
            <person name="Ali J."/>
            <person name="Carter J."/>
            <person name="Cordes M."/>
            <person name="Harris A."/>
            <person name="Isak A."/>
            <person name="van Brunt A."/>
            <person name="Nguyen C."/>
            <person name="Du F."/>
            <person name="Courtney L."/>
            <person name="Kalicki J."/>
            <person name="Ozersky P."/>
            <person name="Abbott S."/>
            <person name="Armstrong J."/>
            <person name="Belter E.A."/>
            <person name="Caruso L."/>
            <person name="Cedroni M."/>
            <person name="Cotton M."/>
            <person name="Davidson T."/>
            <person name="Desai A."/>
            <person name="Elliott G."/>
            <person name="Erb T."/>
            <person name="Fronick C."/>
            <person name="Gaige T."/>
            <person name="Haakenson W."/>
            <person name="Haglund K."/>
            <person name="Holmes A."/>
            <person name="Harkins R."/>
            <person name="Kim K."/>
            <person name="Kruchowski S.S."/>
            <person name="Strong C.M."/>
            <person name="Grewal N."/>
            <person name="Goyea E."/>
            <person name="Hou S."/>
            <person name="Levy A."/>
            <person name="Martinka S."/>
            <person name="Mead K."/>
            <person name="McLellan M.D."/>
            <person name="Meyer R."/>
            <person name="Randall-Maher J."/>
            <person name="Tomlinson C."/>
            <person name="Dauphin-Kohlberg S."/>
            <person name="Kozlowicz-Reilly A."/>
            <person name="Shah N."/>
            <person name="Swearengen-Shahid S."/>
            <person name="Snider J."/>
            <person name="Strong J.T."/>
            <person name="Thompson J."/>
            <person name="Yoakum M."/>
            <person name="Leonard S."/>
            <person name="Pearman C."/>
            <person name="Trani L."/>
            <person name="Radionenko M."/>
            <person name="Waligorski J.E."/>
            <person name="Wang C."/>
            <person name="Rock S.M."/>
            <person name="Tin-Wollam A.-M."/>
            <person name="Maupin R."/>
            <person name="Latreille P."/>
            <person name="Wendl M.C."/>
            <person name="Yang S.-P."/>
            <person name="Pohl C."/>
            <person name="Wallis J.W."/>
            <person name="Spieth J."/>
            <person name="Bieri T.A."/>
            <person name="Berkowicz N."/>
            <person name="Nelson J.O."/>
            <person name="Osborne J."/>
            <person name="Ding L."/>
            <person name="Meyer R."/>
            <person name="Sabo A."/>
            <person name="Shotland Y."/>
            <person name="Sinha P."/>
            <person name="Wohldmann P.E."/>
            <person name="Cook L.L."/>
            <person name="Hickenbotham M.T."/>
            <person name="Eldred J."/>
            <person name="Williams D."/>
            <person name="Jones T.A."/>
            <person name="She X."/>
            <person name="Ciccarelli F.D."/>
            <person name="Izaurralde E."/>
            <person name="Taylor J."/>
            <person name="Schmutz J."/>
            <person name="Myers R.M."/>
            <person name="Cox D.R."/>
            <person name="Huang X."/>
            <person name="McPherson J.D."/>
            <person name="Mardis E.R."/>
            <person name="Clifton S.W."/>
            <person name="Warren W.C."/>
            <person name="Chinwalla A.T."/>
            <person name="Eddy S.R."/>
            <person name="Marra M.A."/>
            <person name="Ovcharenko I."/>
            <person name="Furey T.S."/>
            <person name="Miller W."/>
            <person name="Eichler E.E."/>
            <person name="Bork P."/>
            <person name="Suyama M."/>
            <person name="Torrents D."/>
            <person name="Waterston R.H."/>
            <person name="Wilson R.K."/>
        </authorList>
    </citation>
    <scope>NUCLEOTIDE SEQUENCE [LARGE SCALE GENOMIC DNA]</scope>
</reference>
<reference key="4">
    <citation type="journal article" date="2004" name="Genome Res.">
        <title>The status, quality, and expansion of the NIH full-length cDNA project: the Mammalian Gene Collection (MGC).</title>
        <authorList>
            <consortium name="The MGC Project Team"/>
        </authorList>
    </citation>
    <scope>NUCLEOTIDE SEQUENCE [LARGE SCALE MRNA]</scope>
    <scope>VARIANT VAL-27</scope>
    <source>
        <tissue>Colon</tissue>
    </source>
</reference>
<reference key="5">
    <citation type="journal article" date="2013" name="Am. J. Hum. Genet.">
        <title>TM4SF20 ancestral deletion and susceptibility to a pediatric disorder of early language delay and cerebral white matter hyperintensities.</title>
        <authorList>
            <person name="Wiszniewski W."/>
            <person name="Hunter J.V."/>
            <person name="Hanchard N.A."/>
            <person name="Willer J.R."/>
            <person name="Shaw C."/>
            <person name="Tian Q."/>
            <person name="Illner A."/>
            <person name="Wang X."/>
            <person name="Cheung S.W."/>
            <person name="Patel A."/>
            <person name="Campbell I.M."/>
            <person name="Hixson P."/>
            <person name="Ester A.R."/>
            <person name="Azamian M.S."/>
            <person name="Potocki L."/>
            <person name="Zapata G."/>
            <person name="Hernandez P.P."/>
            <person name="Ramocki M.B."/>
            <person name="Santos-Cortez R.L."/>
            <person name="Wang G."/>
            <person name="York M.K."/>
            <person name="Justice M.J."/>
            <person name="Chu Z.D."/>
            <person name="Bader P.I."/>
            <person name="Omo-Griffith L."/>
            <person name="Madduri N.S."/>
            <person name="Scharer G."/>
            <person name="Crawford H.P."/>
            <person name="Yanatatsaneejit P."/>
            <person name="Eifert A."/>
            <person name="Kerr J."/>
            <person name="Bacino C.A."/>
            <person name="Franklin A.I."/>
            <person name="Goin-Kochel R.P."/>
            <person name="Simpson G."/>
            <person name="Immken L."/>
            <person name="Haque M.E."/>
            <person name="Stosic M."/>
            <person name="Williams M.D."/>
            <person name="Morgan T.M."/>
            <person name="Pruthi S."/>
            <person name="Omary R."/>
            <person name="Boyadjiev S.A."/>
            <person name="Win K.K."/>
            <person name="Thida A."/>
            <person name="Hurles M."/>
            <person name="Hibberd M.L."/>
            <person name="Khor C.C."/>
            <person name="Van Vinh Chau N."/>
            <person name="Gallagher T.E."/>
            <person name="Mutirangura A."/>
            <person name="Stankiewicz P."/>
            <person name="Beaudet A.L."/>
            <person name="Maletic-Savatic M."/>
            <person name="Rosenfeld J.A."/>
            <person name="Shaffer L.G."/>
            <person name="Davis E.E."/>
            <person name="Belmont J.W."/>
            <person name="Dunstan S."/>
            <person name="Simmons C.P."/>
            <person name="Bonnen P.E."/>
            <person name="Leal S.M."/>
            <person name="Katsanis N."/>
            <person name="Lupski J.R."/>
            <person name="Lalani S.R."/>
        </authorList>
    </citation>
    <scope>SUBCELLULAR LOCATION</scope>
    <scope>TISSUE SPECIFICITY</scope>
    <scope>INVOLVEMENT IN SLI5</scope>
</reference>
<reference key="6">
    <citation type="journal article" date="2014" name="PLoS ONE">
        <title>Sustained induction of collagen synthesis by TGF-beta requires regulated intramembrane proteolysis of CREB3L1.</title>
        <authorList>
            <person name="Chen Q."/>
            <person name="Lee C.E."/>
            <person name="Denard B."/>
            <person name="Ye J."/>
        </authorList>
    </citation>
    <scope>INDUCTION</scope>
    <scope>FUNCTION</scope>
</reference>
<reference key="7">
    <citation type="journal article" date="2016" name="Mol. Cell">
        <title>Inverting the topology of a transmembrane protein by regulating the translocation of the first transmembrane helix.</title>
        <authorList>
            <person name="Chen Q."/>
            <person name="Denard B."/>
            <person name="Lee C.E."/>
            <person name="Han S."/>
            <person name="Ye J.S."/>
            <person name="Ye J."/>
        </authorList>
    </citation>
    <scope>FUNCTION</scope>
    <scope>DOMAIN</scope>
    <scope>SUBCELLULAR LOCATION</scope>
    <scope>GLYCOSYLATION</scope>
    <scope>PROTEOLYTIC PROCESSING</scope>
    <scope>MUTAGENESIS OF GLY-12; PHE-13; SER-14; LEU-15; LEU-16; GLY-22; ASN-26; ASN-80; ASN-132; ASN-148 AND ASN-163</scope>
</reference>
<dbReference type="EMBL" id="AY358671">
    <property type="protein sequence ID" value="AAQ89034.1"/>
    <property type="molecule type" value="mRNA"/>
</dbReference>
<dbReference type="EMBL" id="AK026453">
    <property type="protein sequence ID" value="BAB15488.1"/>
    <property type="molecule type" value="mRNA"/>
</dbReference>
<dbReference type="EMBL" id="AC097662">
    <property type="protein sequence ID" value="AAY24253.1"/>
    <property type="molecule type" value="Genomic_DNA"/>
</dbReference>
<dbReference type="EMBL" id="BC035754">
    <property type="protein sequence ID" value="AAH35754.1"/>
    <property type="molecule type" value="mRNA"/>
</dbReference>
<dbReference type="EMBL" id="BC137256">
    <property type="protein sequence ID" value="AAI37257.1"/>
    <property type="molecule type" value="mRNA"/>
</dbReference>
<dbReference type="EMBL" id="BC137257">
    <property type="protein sequence ID" value="AAI37258.1"/>
    <property type="molecule type" value="mRNA"/>
</dbReference>
<dbReference type="CCDS" id="CCDS2466.1"/>
<dbReference type="RefSeq" id="NP_079071.2">
    <property type="nucleotide sequence ID" value="NM_024795.4"/>
</dbReference>
<dbReference type="RefSeq" id="XP_054199970.1">
    <property type="nucleotide sequence ID" value="XM_054343995.1"/>
</dbReference>
<dbReference type="BioGRID" id="122943">
    <property type="interactions" value="18"/>
</dbReference>
<dbReference type="FunCoup" id="Q53R12">
    <property type="interactions" value="9"/>
</dbReference>
<dbReference type="IntAct" id="Q53R12">
    <property type="interactions" value="16"/>
</dbReference>
<dbReference type="STRING" id="9606.ENSP00000303028"/>
<dbReference type="TCDB" id="8.A.75.1.4">
    <property type="family name" value="the transmembrane 4 l6 (tm4l6) family"/>
</dbReference>
<dbReference type="GlyGen" id="Q53R12">
    <property type="glycosylation" value="3 sites"/>
</dbReference>
<dbReference type="PhosphoSitePlus" id="Q53R12"/>
<dbReference type="BioMuta" id="TM4SF20"/>
<dbReference type="DMDM" id="74726514"/>
<dbReference type="jPOST" id="Q53R12"/>
<dbReference type="MassIVE" id="Q53R12"/>
<dbReference type="PaxDb" id="9606-ENSP00000303028"/>
<dbReference type="PeptideAtlas" id="Q53R12"/>
<dbReference type="ProteomicsDB" id="62514"/>
<dbReference type="ABCD" id="Q53R12">
    <property type="antibodies" value="4 sequenced antibodies"/>
</dbReference>
<dbReference type="Antibodypedia" id="47680">
    <property type="antibodies" value="81 antibodies from 14 providers"/>
</dbReference>
<dbReference type="DNASU" id="79853"/>
<dbReference type="Ensembl" id="ENST00000304568.4">
    <property type="protein sequence ID" value="ENSP00000303028.3"/>
    <property type="gene ID" value="ENSG00000168955.4"/>
</dbReference>
<dbReference type="GeneID" id="79853"/>
<dbReference type="KEGG" id="hsa:79853"/>
<dbReference type="MANE-Select" id="ENST00000304568.4">
    <property type="protein sequence ID" value="ENSP00000303028.3"/>
    <property type="RefSeq nucleotide sequence ID" value="NM_024795.4"/>
    <property type="RefSeq protein sequence ID" value="NP_079071.2"/>
</dbReference>
<dbReference type="UCSC" id="uc002vpb.3">
    <property type="organism name" value="human"/>
</dbReference>
<dbReference type="AGR" id="HGNC:26230"/>
<dbReference type="CTD" id="79853"/>
<dbReference type="DisGeNET" id="79853"/>
<dbReference type="GeneCards" id="TM4SF20"/>
<dbReference type="HGNC" id="HGNC:26230">
    <property type="gene designation" value="TM4SF20"/>
</dbReference>
<dbReference type="HPA" id="ENSG00000168955">
    <property type="expression patterns" value="Tissue enriched (intestine)"/>
</dbReference>
<dbReference type="MalaCards" id="TM4SF20"/>
<dbReference type="MIM" id="615404">
    <property type="type" value="gene"/>
</dbReference>
<dbReference type="MIM" id="615432">
    <property type="type" value="phenotype"/>
</dbReference>
<dbReference type="neXtProt" id="NX_Q53R12"/>
<dbReference type="OpenTargets" id="ENSG00000168955"/>
<dbReference type="PharmGKB" id="PA142670803"/>
<dbReference type="VEuPathDB" id="HostDB:ENSG00000168955"/>
<dbReference type="eggNOG" id="ENOG502RZTZ">
    <property type="taxonomic scope" value="Eukaryota"/>
</dbReference>
<dbReference type="GeneTree" id="ENSGT01030000234590"/>
<dbReference type="HOGENOM" id="CLU_105103_0_0_1"/>
<dbReference type="InParanoid" id="Q53R12"/>
<dbReference type="OMA" id="LEGPLMC"/>
<dbReference type="OrthoDB" id="9937421at2759"/>
<dbReference type="PAN-GO" id="Q53R12">
    <property type="GO annotations" value="1 GO annotation based on evolutionary models"/>
</dbReference>
<dbReference type="PhylomeDB" id="Q53R12"/>
<dbReference type="TreeFam" id="TF331371"/>
<dbReference type="PathwayCommons" id="Q53R12"/>
<dbReference type="SignaLink" id="Q53R12"/>
<dbReference type="BioGRID-ORCS" id="79853">
    <property type="hits" value="14 hits in 1144 CRISPR screens"/>
</dbReference>
<dbReference type="GenomeRNAi" id="79853"/>
<dbReference type="Pharos" id="Q53R12">
    <property type="development level" value="Tbio"/>
</dbReference>
<dbReference type="PRO" id="PR:Q53R12"/>
<dbReference type="Proteomes" id="UP000005640">
    <property type="component" value="Chromosome 2"/>
</dbReference>
<dbReference type="RNAct" id="Q53R12">
    <property type="molecule type" value="protein"/>
</dbReference>
<dbReference type="Bgee" id="ENSG00000168955">
    <property type="expression patterns" value="Expressed in jejunal mucosa and 58 other cell types or tissues"/>
</dbReference>
<dbReference type="ExpressionAtlas" id="Q53R12">
    <property type="expression patterns" value="baseline and differential"/>
</dbReference>
<dbReference type="GO" id="GO:0005789">
    <property type="term" value="C:endoplasmic reticulum membrane"/>
    <property type="evidence" value="ECO:0000314"/>
    <property type="project" value="UniProtKB"/>
</dbReference>
<dbReference type="GO" id="GO:0005925">
    <property type="term" value="C:focal adhesion"/>
    <property type="evidence" value="ECO:0000314"/>
    <property type="project" value="HPA"/>
</dbReference>
<dbReference type="GO" id="GO:0016020">
    <property type="term" value="C:membrane"/>
    <property type="evidence" value="ECO:0000318"/>
    <property type="project" value="GO_Central"/>
</dbReference>
<dbReference type="GO" id="GO:0005886">
    <property type="term" value="C:plasma membrane"/>
    <property type="evidence" value="ECO:0000314"/>
    <property type="project" value="HPA"/>
</dbReference>
<dbReference type="GO" id="GO:0045861">
    <property type="term" value="P:negative regulation of proteolysis"/>
    <property type="evidence" value="ECO:0000314"/>
    <property type="project" value="UniProtKB"/>
</dbReference>
<dbReference type="InterPro" id="IPR008661">
    <property type="entry name" value="L6_membrane"/>
</dbReference>
<dbReference type="PANTHER" id="PTHR14198">
    <property type="entry name" value="TRANSMEMBRANE 4 L6 FAMILY MEMBER 1-RELATED"/>
    <property type="match status" value="1"/>
</dbReference>
<dbReference type="PANTHER" id="PTHR14198:SF17">
    <property type="entry name" value="TRANSMEMBRANE 4 L6 FAMILY MEMBER 20"/>
    <property type="match status" value="1"/>
</dbReference>
<dbReference type="Pfam" id="PF05805">
    <property type="entry name" value="L6_membrane"/>
    <property type="match status" value="1"/>
</dbReference>
<organism>
    <name type="scientific">Homo sapiens</name>
    <name type="common">Human</name>
    <dbReference type="NCBI Taxonomy" id="9606"/>
    <lineage>
        <taxon>Eukaryota</taxon>
        <taxon>Metazoa</taxon>
        <taxon>Chordata</taxon>
        <taxon>Craniata</taxon>
        <taxon>Vertebrata</taxon>
        <taxon>Euteleostomi</taxon>
        <taxon>Mammalia</taxon>
        <taxon>Eutheria</taxon>
        <taxon>Euarchontoglires</taxon>
        <taxon>Primates</taxon>
        <taxon>Haplorrhini</taxon>
        <taxon>Catarrhini</taxon>
        <taxon>Hominidae</taxon>
        <taxon>Homo</taxon>
    </lineage>
</organism>
<name>T4S20_HUMAN</name>